<protein>
    <recommendedName>
        <fullName>Nuclear transition protein 2</fullName>
        <shortName>TP-2</shortName>
        <shortName>TP2</shortName>
    </recommendedName>
</protein>
<comment type="function">
    <text evidence="3 4 5 6">Plays a key role in the replacement of histones to protamine in the elongating spermatids of mammals (PubMed:15083521, PubMed:15163613, PubMed:15189834, PubMed:28366643). In condensing spermatids, loaded onto the nucleosomes, where it promotes the recruitment and processing of protamines, which are responsible for histone eviction (PubMed:28366643). The histone H2AB1-H2BC1/TH2B dimer is required for loading of TNP2 onto chromatin (PubMed:28366643).</text>
</comment>
<comment type="subcellular location">
    <subcellularLocation>
        <location evidence="4">Nucleus</location>
    </subcellularLocation>
    <subcellularLocation>
        <location evidence="6">Chromosome</location>
    </subcellularLocation>
    <text evidence="1 6">Loaded onto the nucleosomes of condensing spermatids (PubMed:28366643). Inclusion of the H2AB1-H2BC1/TH2B dimer into chromatin opens the nucleosomes, releasing the nucleosomal DNA ends and allowing the invasion of nucleosomes by transition protein TNP2 (PubMed:28366643). Nuclear import is mediated by IPO4. Nucleolar localization requires the protein to be phosphorylated (By similarity).</text>
</comment>
<comment type="developmental stage">
    <text evidence="4 6 7">Appears in elongating/condensing spermatids when histones are still detectable (PubMed:15163613, PubMed:32726616). Coexpressed with H2ab1 during late spermiogenesis (PubMed:28366643).</text>
</comment>
<comment type="disruption phenotype">
    <text evidence="3 4 5">Male mice lacking both Tnp1 and Tnp2 are completely infertile, but protamine alone are capable of histone eviction (PubMed:15083521, PubMed:15163613, PubMed:15189834). A significant proportion of Prm2 remains unprocessed (PubMed:15083521, PubMed:15163613, PubMed:15189834). Chromatin in mature spermatozoa shows defects in density (PubMed:15083521, PubMed:15189834).</text>
</comment>
<comment type="similarity">
    <text evidence="8">Belongs to the nuclear transition protein 2 family.</text>
</comment>
<comment type="sequence caution" evidence="8">
    <conflict type="erroneous initiation">
        <sequence resource="EMBL-CDS" id="AAA40468"/>
    </conflict>
</comment>
<keyword id="KW-0158">Chromosome</keyword>
<keyword id="KW-0217">Developmental protein</keyword>
<keyword id="KW-0221">Differentiation</keyword>
<keyword id="KW-0238">DNA-binding</keyword>
<keyword id="KW-0479">Metal-binding</keyword>
<keyword id="KW-0544">Nucleosome core</keyword>
<keyword id="KW-0539">Nucleus</keyword>
<keyword id="KW-0597">Phosphoprotein</keyword>
<keyword id="KW-1185">Reference proteome</keyword>
<keyword id="KW-0744">Spermatogenesis</keyword>
<keyword id="KW-0862">Zinc</keyword>
<feature type="chain" id="PRO_0000191428" description="Nuclear transition protein 2">
    <location>
        <begin position="1"/>
        <end position="117"/>
    </location>
</feature>
<feature type="region of interest" description="Disordered" evidence="2">
    <location>
        <begin position="1"/>
        <end position="117"/>
    </location>
</feature>
<feature type="short sequence motif" description="Nuclear localization signal" evidence="1">
    <location>
        <begin position="90"/>
        <end position="98"/>
    </location>
</feature>
<feature type="compositionally biased region" description="Low complexity" evidence="2">
    <location>
        <begin position="7"/>
        <end position="26"/>
    </location>
</feature>
<feature type="compositionally biased region" description="Low complexity" evidence="2">
    <location>
        <begin position="44"/>
        <end position="53"/>
    </location>
</feature>
<feature type="compositionally biased region" description="Basic residues" evidence="2">
    <location>
        <begin position="60"/>
        <end position="77"/>
    </location>
</feature>
<feature type="compositionally biased region" description="Basic residues" evidence="2">
    <location>
        <begin position="93"/>
        <end position="117"/>
    </location>
</feature>
<feature type="binding site" evidence="1">
    <location>
        <position position="12"/>
    </location>
    <ligand>
        <name>Zn(2+)</name>
        <dbReference type="ChEBI" id="CHEBI:29105"/>
    </ligand>
</feature>
<feature type="binding site" evidence="1">
    <location>
        <position position="14"/>
    </location>
    <ligand>
        <name>Zn(2+)</name>
        <dbReference type="ChEBI" id="CHEBI:29105"/>
    </ligand>
</feature>
<feature type="binding site" evidence="1">
    <location>
        <position position="16"/>
    </location>
    <ligand>
        <name>Zn(2+)</name>
        <dbReference type="ChEBI" id="CHEBI:29105"/>
    </ligand>
</feature>
<feature type="binding site" evidence="1">
    <location>
        <position position="24"/>
    </location>
    <ligand>
        <name>Zn(2+)</name>
        <dbReference type="ChEBI" id="CHEBI:29105"/>
    </ligand>
</feature>
<feature type="binding site" evidence="1">
    <location>
        <position position="32"/>
    </location>
    <ligand>
        <name>Zn(2+)</name>
        <dbReference type="ChEBI" id="CHEBI:29105"/>
    </ligand>
</feature>
<feature type="binding site" evidence="1">
    <location>
        <position position="34"/>
    </location>
    <ligand>
        <name>Zn(2+)</name>
        <dbReference type="ChEBI" id="CHEBI:29105"/>
    </ligand>
</feature>
<feature type="binding site" evidence="1">
    <location>
        <position position="38"/>
    </location>
    <ligand>
        <name>Zn(2+)</name>
        <dbReference type="ChEBI" id="CHEBI:29105"/>
    </ligand>
</feature>
<feature type="binding site" evidence="1">
    <location>
        <position position="41"/>
    </location>
    <ligand>
        <name>Zn(2+)</name>
        <dbReference type="ChEBI" id="CHEBI:29105"/>
    </ligand>
</feature>
<feature type="modified residue" description="Phosphoserine" evidence="1">
    <location>
        <position position="112"/>
    </location>
</feature>
<feature type="sequence conflict" description="In Ref. 1; AAA40469, 2; AAA40467/AAA40468 and 3; CAA87413." ref="1 2 3">
    <original>S</original>
    <variation>T</variation>
    <location>
        <position position="111"/>
    </location>
</feature>
<sequence>MDTKMQSLPTTHPHPHSSSRPQSHTSNQCNQCTCSHHCRSCSQAGHAGSSSSPSPGPPMKHPKPSVHSRHSPARPSHRGSCPKNRKTFEGKVSKRKAVRRRKRTHRAKRRSSGRRYK</sequence>
<name>STP2_MOUSE</name>
<proteinExistence type="evidence at transcript level"/>
<organism>
    <name type="scientific">Mus musculus</name>
    <name type="common">Mouse</name>
    <dbReference type="NCBI Taxonomy" id="10090"/>
    <lineage>
        <taxon>Eukaryota</taxon>
        <taxon>Metazoa</taxon>
        <taxon>Chordata</taxon>
        <taxon>Craniata</taxon>
        <taxon>Vertebrata</taxon>
        <taxon>Euteleostomi</taxon>
        <taxon>Mammalia</taxon>
        <taxon>Eutheria</taxon>
        <taxon>Euarchontoglires</taxon>
        <taxon>Glires</taxon>
        <taxon>Rodentia</taxon>
        <taxon>Myomorpha</taxon>
        <taxon>Muroidea</taxon>
        <taxon>Muridae</taxon>
        <taxon>Murinae</taxon>
        <taxon>Mus</taxon>
        <taxon>Mus</taxon>
    </lineage>
</organism>
<reference key="1">
    <citation type="journal article" date="1990" name="Gene">
        <title>Nucleotide sequence of the gene encoding mouse transition protein 2.</title>
        <authorList>
            <person name="Kleene K.C."/>
            <person name="Gerstel J."/>
            <person name="Shih D."/>
        </authorList>
    </citation>
    <scope>NUCLEOTIDE SEQUENCE [GENOMIC DNA]</scope>
</reference>
<reference key="2">
    <citation type="journal article" date="1987" name="J. Biol. Chem.">
        <title>Characterization of a cDNA clone encoding a basic protein, TP2, involved in chromatin condensation during spermiogenesis in the mouse.</title>
        <authorList>
            <person name="Kleene K.C."/>
            <person name="Flynn J.F."/>
        </authorList>
    </citation>
    <scope>NUCLEOTIDE SEQUENCE [MRNA]</scope>
</reference>
<reference key="3">
    <citation type="journal article" date="1996" name="Mol. Reprod. Dev.">
        <title>Sequence analysis of the conserved protamine gene cluster shows that it contains a fourth expressed gene.</title>
        <authorList>
            <person name="Schlueter G."/>
            <person name="Celik A.B."/>
            <person name="Obata R."/>
            <person name="Schlicker M."/>
            <person name="Hofferbert S."/>
            <person name="Schlung A."/>
            <person name="Adham I.M."/>
            <person name="Engel W."/>
        </authorList>
    </citation>
    <scope>NUCLEOTIDE SEQUENCE [GENOMIC DNA]</scope>
    <source>
        <strain>C129</strain>
    </source>
</reference>
<reference key="4">
    <citation type="journal article" date="2005" name="Science">
        <title>The transcriptional landscape of the mammalian genome.</title>
        <authorList>
            <person name="Carninci P."/>
            <person name="Kasukawa T."/>
            <person name="Katayama S."/>
            <person name="Gough J."/>
            <person name="Frith M.C."/>
            <person name="Maeda N."/>
            <person name="Oyama R."/>
            <person name="Ravasi T."/>
            <person name="Lenhard B."/>
            <person name="Wells C."/>
            <person name="Kodzius R."/>
            <person name="Shimokawa K."/>
            <person name="Bajic V.B."/>
            <person name="Brenner S.E."/>
            <person name="Batalov S."/>
            <person name="Forrest A.R."/>
            <person name="Zavolan M."/>
            <person name="Davis M.J."/>
            <person name="Wilming L.G."/>
            <person name="Aidinis V."/>
            <person name="Allen J.E."/>
            <person name="Ambesi-Impiombato A."/>
            <person name="Apweiler R."/>
            <person name="Aturaliya R.N."/>
            <person name="Bailey T.L."/>
            <person name="Bansal M."/>
            <person name="Baxter L."/>
            <person name="Beisel K.W."/>
            <person name="Bersano T."/>
            <person name="Bono H."/>
            <person name="Chalk A.M."/>
            <person name="Chiu K.P."/>
            <person name="Choudhary V."/>
            <person name="Christoffels A."/>
            <person name="Clutterbuck D.R."/>
            <person name="Crowe M.L."/>
            <person name="Dalla E."/>
            <person name="Dalrymple B.P."/>
            <person name="de Bono B."/>
            <person name="Della Gatta G."/>
            <person name="di Bernardo D."/>
            <person name="Down T."/>
            <person name="Engstrom P."/>
            <person name="Fagiolini M."/>
            <person name="Faulkner G."/>
            <person name="Fletcher C.F."/>
            <person name="Fukushima T."/>
            <person name="Furuno M."/>
            <person name="Futaki S."/>
            <person name="Gariboldi M."/>
            <person name="Georgii-Hemming P."/>
            <person name="Gingeras T.R."/>
            <person name="Gojobori T."/>
            <person name="Green R.E."/>
            <person name="Gustincich S."/>
            <person name="Harbers M."/>
            <person name="Hayashi Y."/>
            <person name="Hensch T.K."/>
            <person name="Hirokawa N."/>
            <person name="Hill D."/>
            <person name="Huminiecki L."/>
            <person name="Iacono M."/>
            <person name="Ikeo K."/>
            <person name="Iwama A."/>
            <person name="Ishikawa T."/>
            <person name="Jakt M."/>
            <person name="Kanapin A."/>
            <person name="Katoh M."/>
            <person name="Kawasawa Y."/>
            <person name="Kelso J."/>
            <person name="Kitamura H."/>
            <person name="Kitano H."/>
            <person name="Kollias G."/>
            <person name="Krishnan S.P."/>
            <person name="Kruger A."/>
            <person name="Kummerfeld S.K."/>
            <person name="Kurochkin I.V."/>
            <person name="Lareau L.F."/>
            <person name="Lazarevic D."/>
            <person name="Lipovich L."/>
            <person name="Liu J."/>
            <person name="Liuni S."/>
            <person name="McWilliam S."/>
            <person name="Madan Babu M."/>
            <person name="Madera M."/>
            <person name="Marchionni L."/>
            <person name="Matsuda H."/>
            <person name="Matsuzawa S."/>
            <person name="Miki H."/>
            <person name="Mignone F."/>
            <person name="Miyake S."/>
            <person name="Morris K."/>
            <person name="Mottagui-Tabar S."/>
            <person name="Mulder N."/>
            <person name="Nakano N."/>
            <person name="Nakauchi H."/>
            <person name="Ng P."/>
            <person name="Nilsson R."/>
            <person name="Nishiguchi S."/>
            <person name="Nishikawa S."/>
            <person name="Nori F."/>
            <person name="Ohara O."/>
            <person name="Okazaki Y."/>
            <person name="Orlando V."/>
            <person name="Pang K.C."/>
            <person name="Pavan W.J."/>
            <person name="Pavesi G."/>
            <person name="Pesole G."/>
            <person name="Petrovsky N."/>
            <person name="Piazza S."/>
            <person name="Reed J."/>
            <person name="Reid J.F."/>
            <person name="Ring B.Z."/>
            <person name="Ringwald M."/>
            <person name="Rost B."/>
            <person name="Ruan Y."/>
            <person name="Salzberg S.L."/>
            <person name="Sandelin A."/>
            <person name="Schneider C."/>
            <person name="Schoenbach C."/>
            <person name="Sekiguchi K."/>
            <person name="Semple C.A."/>
            <person name="Seno S."/>
            <person name="Sessa L."/>
            <person name="Sheng Y."/>
            <person name="Shibata Y."/>
            <person name="Shimada H."/>
            <person name="Shimada K."/>
            <person name="Silva D."/>
            <person name="Sinclair B."/>
            <person name="Sperling S."/>
            <person name="Stupka E."/>
            <person name="Sugiura K."/>
            <person name="Sultana R."/>
            <person name="Takenaka Y."/>
            <person name="Taki K."/>
            <person name="Tammoja K."/>
            <person name="Tan S.L."/>
            <person name="Tang S."/>
            <person name="Taylor M.S."/>
            <person name="Tegner J."/>
            <person name="Teichmann S.A."/>
            <person name="Ueda H.R."/>
            <person name="van Nimwegen E."/>
            <person name="Verardo R."/>
            <person name="Wei C.L."/>
            <person name="Yagi K."/>
            <person name="Yamanishi H."/>
            <person name="Zabarovsky E."/>
            <person name="Zhu S."/>
            <person name="Zimmer A."/>
            <person name="Hide W."/>
            <person name="Bult C."/>
            <person name="Grimmond S.M."/>
            <person name="Teasdale R.D."/>
            <person name="Liu E.T."/>
            <person name="Brusic V."/>
            <person name="Quackenbush J."/>
            <person name="Wahlestedt C."/>
            <person name="Mattick J.S."/>
            <person name="Hume D.A."/>
            <person name="Kai C."/>
            <person name="Sasaki D."/>
            <person name="Tomaru Y."/>
            <person name="Fukuda S."/>
            <person name="Kanamori-Katayama M."/>
            <person name="Suzuki M."/>
            <person name="Aoki J."/>
            <person name="Arakawa T."/>
            <person name="Iida J."/>
            <person name="Imamura K."/>
            <person name="Itoh M."/>
            <person name="Kato T."/>
            <person name="Kawaji H."/>
            <person name="Kawagashira N."/>
            <person name="Kawashima T."/>
            <person name="Kojima M."/>
            <person name="Kondo S."/>
            <person name="Konno H."/>
            <person name="Nakano K."/>
            <person name="Ninomiya N."/>
            <person name="Nishio T."/>
            <person name="Okada M."/>
            <person name="Plessy C."/>
            <person name="Shibata K."/>
            <person name="Shiraki T."/>
            <person name="Suzuki S."/>
            <person name="Tagami M."/>
            <person name="Waki K."/>
            <person name="Watahiki A."/>
            <person name="Okamura-Oho Y."/>
            <person name="Suzuki H."/>
            <person name="Kawai J."/>
            <person name="Hayashizaki Y."/>
        </authorList>
    </citation>
    <scope>NUCLEOTIDE SEQUENCE [LARGE SCALE MRNA]</scope>
    <source>
        <strain>C57BL/6J</strain>
        <tissue>Testis</tissue>
    </source>
</reference>
<reference key="5">
    <citation type="journal article" date="2009" name="PLoS Biol.">
        <title>Lineage-specific biology revealed by a finished genome assembly of the mouse.</title>
        <authorList>
            <person name="Church D.M."/>
            <person name="Goodstadt L."/>
            <person name="Hillier L.W."/>
            <person name="Zody M.C."/>
            <person name="Goldstein S."/>
            <person name="She X."/>
            <person name="Bult C.J."/>
            <person name="Agarwala R."/>
            <person name="Cherry J.L."/>
            <person name="DiCuccio M."/>
            <person name="Hlavina W."/>
            <person name="Kapustin Y."/>
            <person name="Meric P."/>
            <person name="Maglott D."/>
            <person name="Birtle Z."/>
            <person name="Marques A.C."/>
            <person name="Graves T."/>
            <person name="Zhou S."/>
            <person name="Teague B."/>
            <person name="Potamousis K."/>
            <person name="Churas C."/>
            <person name="Place M."/>
            <person name="Herschleb J."/>
            <person name="Runnheim R."/>
            <person name="Forrest D."/>
            <person name="Amos-Landgraf J."/>
            <person name="Schwartz D.C."/>
            <person name="Cheng Z."/>
            <person name="Lindblad-Toh K."/>
            <person name="Eichler E.E."/>
            <person name="Ponting C.P."/>
        </authorList>
    </citation>
    <scope>NUCLEOTIDE SEQUENCE [LARGE SCALE GENOMIC DNA]</scope>
    <source>
        <strain>C57BL/6J</strain>
    </source>
</reference>
<reference key="6">
    <citation type="submission" date="2005-07" db="EMBL/GenBank/DDBJ databases">
        <authorList>
            <person name="Mural R.J."/>
            <person name="Adams M.D."/>
            <person name="Myers E.W."/>
            <person name="Smith H.O."/>
            <person name="Venter J.C."/>
        </authorList>
    </citation>
    <scope>NUCLEOTIDE SEQUENCE [LARGE SCALE GENOMIC DNA]</scope>
</reference>
<reference key="7">
    <citation type="journal article" date="2004" name="Genome Res.">
        <title>The status, quality, and expansion of the NIH full-length cDNA project: the Mammalian Gene Collection (MGC).</title>
        <authorList>
            <consortium name="The MGC Project Team"/>
        </authorList>
    </citation>
    <scope>NUCLEOTIDE SEQUENCE [LARGE SCALE MRNA]</scope>
    <source>
        <tissue>Testis</tissue>
    </source>
</reference>
<reference key="8">
    <citation type="journal article" date="2004" name="Biol. Reprod.">
        <title>Nucleoprotein transitions during spermiogenesis in mice with transition nuclear protein Tnp1 and Tnp2 mutations.</title>
        <authorList>
            <person name="Zhao M."/>
            <person name="Shirley C.R."/>
            <person name="Mounsey S."/>
            <person name="Meistrich M.L."/>
        </authorList>
    </citation>
    <scope>FUNCTION</scope>
    <scope>SUBCELLULAR LOCATION</scope>
    <scope>DISRUPTION PHENOTYPE</scope>
    <scope>DEVELOPMENTAL STAGE</scope>
</reference>
<reference key="9">
    <citation type="journal article" date="2004" name="Biol. Reprod.">
        <title>Abnormalities and reduced reproductive potential of sperm from Tnp1- and Tnp2-null double mutant mice.</title>
        <authorList>
            <person name="Shirley C.R."/>
            <person name="Hayashi S."/>
            <person name="Mounsey S."/>
            <person name="Yanagimachi R."/>
            <person name="Meistrich M.L."/>
        </authorList>
    </citation>
    <scope>FUNCTION</scope>
    <scope>DISRUPTION PHENOTYPE</scope>
</reference>
<reference key="10">
    <citation type="journal article" date="2004" name="Genesis">
        <title>Transition nuclear proteins are required for normal chromatin condensation and functional sperm development.</title>
        <authorList>
            <person name="Zhao M."/>
            <person name="Shirley C.R."/>
            <person name="Hayashi S."/>
            <person name="Marcon L."/>
            <person name="Mohapatra B."/>
            <person name="Suganuma R."/>
            <person name="Behringer R.R."/>
            <person name="Boissonneault G."/>
            <person name="Yanagimachi R."/>
            <person name="Meistrich M.L."/>
        </authorList>
    </citation>
    <scope>FUNCTION</scope>
    <scope>DISRUPTION PHENOTYPE</scope>
</reference>
<reference key="11">
    <citation type="journal article" date="2017" name="Mol. Cell">
        <title>Histone variant H2A.L.2 guides transition protein-dependent protamine assembly in male germ cells.</title>
        <authorList>
            <person name="Barral S."/>
            <person name="Morozumi Y."/>
            <person name="Tanaka H."/>
            <person name="Montellier E."/>
            <person name="Govin J."/>
            <person name="de Dieuleveult M."/>
            <person name="Charbonnier G."/>
            <person name="Coute Y."/>
            <person name="Puthier D."/>
            <person name="Buchou T."/>
            <person name="Boussouar F."/>
            <person name="Urahama T."/>
            <person name="Fenaille F."/>
            <person name="Curtet S."/>
            <person name="Hery P."/>
            <person name="Fernandez-Nunez N."/>
            <person name="Shiota H."/>
            <person name="Gerard M."/>
            <person name="Rousseaux S."/>
            <person name="Kurumizaka H."/>
            <person name="Khochbin S."/>
        </authorList>
    </citation>
    <scope>FUNCTION</scope>
    <scope>SUBCELLULAR LOCATION</scope>
</reference>
<reference key="12">
    <citation type="journal article" date="2020" name="Cell Rep.">
        <title>PHF7 Modulates BRDT Stability and Histone-to-Protamine Exchange during Spermiogenesis.</title>
        <authorList>
            <person name="Kim C.R."/>
            <person name="Noda T."/>
            <person name="Kim H."/>
            <person name="Kim G."/>
            <person name="Park S."/>
            <person name="Na Y."/>
            <person name="Oura S."/>
            <person name="Shimada K."/>
            <person name="Bang I."/>
            <person name="Ahn J.Y."/>
            <person name="Kim Y.R."/>
            <person name="Oh S.K."/>
            <person name="Choi H.J."/>
            <person name="Kim J.S."/>
            <person name="Jung I."/>
            <person name="Lee H."/>
            <person name="Okada Y."/>
            <person name="Ikawa M."/>
            <person name="Baek S.H."/>
        </authorList>
    </citation>
    <scope>DEVELOPMENTAL STAGE</scope>
</reference>
<accession>P11378</accession>
<accession>Q91XK4</accession>
<evidence type="ECO:0000250" key="1">
    <source>
        <dbReference type="UniProtKB" id="P11101"/>
    </source>
</evidence>
<evidence type="ECO:0000256" key="2">
    <source>
        <dbReference type="SAM" id="MobiDB-lite"/>
    </source>
</evidence>
<evidence type="ECO:0000269" key="3">
    <source>
    </source>
</evidence>
<evidence type="ECO:0000269" key="4">
    <source>
    </source>
</evidence>
<evidence type="ECO:0000269" key="5">
    <source>
    </source>
</evidence>
<evidence type="ECO:0000269" key="6">
    <source>
    </source>
</evidence>
<evidence type="ECO:0000269" key="7">
    <source>
    </source>
</evidence>
<evidence type="ECO:0000305" key="8"/>
<evidence type="ECO:0000312" key="9">
    <source>
        <dbReference type="MGI" id="MGI:98785"/>
    </source>
</evidence>
<dbReference type="EMBL" id="M60254">
    <property type="protein sequence ID" value="AAA40469.1"/>
    <property type="molecule type" value="Genomic_DNA"/>
</dbReference>
<dbReference type="EMBL" id="J03494">
    <property type="protein sequence ID" value="AAA40467.1"/>
    <property type="molecule type" value="mRNA"/>
</dbReference>
<dbReference type="EMBL" id="J03494">
    <property type="protein sequence ID" value="AAA40468.1"/>
    <property type="status" value="ALT_INIT"/>
    <property type="molecule type" value="mRNA"/>
</dbReference>
<dbReference type="EMBL" id="Z47352">
    <property type="protein sequence ID" value="CAA87413.1"/>
    <property type="molecule type" value="Genomic_DNA"/>
</dbReference>
<dbReference type="EMBL" id="AK005689">
    <property type="protein sequence ID" value="BAB24187.1"/>
    <property type="molecule type" value="mRNA"/>
</dbReference>
<dbReference type="EMBL" id="CT010583">
    <property type="status" value="NOT_ANNOTATED_CDS"/>
    <property type="molecule type" value="Genomic_DNA"/>
</dbReference>
<dbReference type="EMBL" id="CH466521">
    <property type="protein sequence ID" value="EDK97324.1"/>
    <property type="molecule type" value="Genomic_DNA"/>
</dbReference>
<dbReference type="EMBL" id="BC092529">
    <property type="protein sequence ID" value="AAH92529.1"/>
    <property type="molecule type" value="mRNA"/>
</dbReference>
<dbReference type="CCDS" id="CCDS27953.1"/>
<dbReference type="PIR" id="S14529">
    <property type="entry name" value="S14529"/>
</dbReference>
<dbReference type="RefSeq" id="NP_038722.3">
    <property type="nucleotide sequence ID" value="NM_013694.4"/>
</dbReference>
<dbReference type="SMR" id="P11378"/>
<dbReference type="FunCoup" id="P11378">
    <property type="interactions" value="54"/>
</dbReference>
<dbReference type="STRING" id="10090.ENSMUSP00000053078"/>
<dbReference type="iPTMnet" id="P11378"/>
<dbReference type="PhosphoSitePlus" id="P11378"/>
<dbReference type="SwissPalm" id="P11378"/>
<dbReference type="PaxDb" id="10090-ENSMUSP00000053078"/>
<dbReference type="ProteomicsDB" id="254593"/>
<dbReference type="Antibodypedia" id="65957">
    <property type="antibodies" value="121 antibodies from 20 providers"/>
</dbReference>
<dbReference type="DNASU" id="21959"/>
<dbReference type="Ensembl" id="ENSMUST00000051297.9">
    <property type="protein sequence ID" value="ENSMUSP00000053078.8"/>
    <property type="gene ID" value="ENSMUSG00000043050.9"/>
</dbReference>
<dbReference type="GeneID" id="21959"/>
<dbReference type="KEGG" id="mmu:21959"/>
<dbReference type="UCSC" id="uc007yee.1">
    <property type="organism name" value="mouse"/>
</dbReference>
<dbReference type="AGR" id="MGI:98785"/>
<dbReference type="CTD" id="7142"/>
<dbReference type="MGI" id="MGI:98785">
    <property type="gene designation" value="Tnp2"/>
</dbReference>
<dbReference type="VEuPathDB" id="HostDB:ENSMUSG00000043050"/>
<dbReference type="eggNOG" id="KOG4566">
    <property type="taxonomic scope" value="Eukaryota"/>
</dbReference>
<dbReference type="GeneTree" id="ENSGT00390000008176"/>
<dbReference type="InParanoid" id="P11378"/>
<dbReference type="OMA" id="SCSHHCQ"/>
<dbReference type="BioGRID-ORCS" id="21959">
    <property type="hits" value="0 hits in 77 CRISPR screens"/>
</dbReference>
<dbReference type="CD-CODE" id="DE1E139C">
    <property type="entry name" value="Chromatoid body"/>
</dbReference>
<dbReference type="ChiTaRS" id="Tnp2">
    <property type="organism name" value="mouse"/>
</dbReference>
<dbReference type="PRO" id="PR:P11378"/>
<dbReference type="Proteomes" id="UP000000589">
    <property type="component" value="Chromosome 16"/>
</dbReference>
<dbReference type="RNAct" id="P11378">
    <property type="molecule type" value="protein"/>
</dbReference>
<dbReference type="Bgee" id="ENSMUSG00000043050">
    <property type="expression patterns" value="Expressed in seminiferous tubule of testis and 40 other cell types or tissues"/>
</dbReference>
<dbReference type="GO" id="GO:0001673">
    <property type="term" value="C:male germ cell nucleus"/>
    <property type="evidence" value="ECO:0000314"/>
    <property type="project" value="MGI"/>
</dbReference>
<dbReference type="GO" id="GO:0000786">
    <property type="term" value="C:nucleosome"/>
    <property type="evidence" value="ECO:0000314"/>
    <property type="project" value="UniProtKB"/>
</dbReference>
<dbReference type="GO" id="GO:0005634">
    <property type="term" value="C:nucleus"/>
    <property type="evidence" value="ECO:0000314"/>
    <property type="project" value="MGI"/>
</dbReference>
<dbReference type="GO" id="GO:0003677">
    <property type="term" value="F:DNA binding"/>
    <property type="evidence" value="ECO:0007669"/>
    <property type="project" value="UniProtKB-KW"/>
</dbReference>
<dbReference type="GO" id="GO:0046872">
    <property type="term" value="F:metal ion binding"/>
    <property type="evidence" value="ECO:0007669"/>
    <property type="project" value="UniProtKB-KW"/>
</dbReference>
<dbReference type="GO" id="GO:0007340">
    <property type="term" value="P:acrosome reaction"/>
    <property type="evidence" value="ECO:0000315"/>
    <property type="project" value="MGI"/>
</dbReference>
<dbReference type="GO" id="GO:0007339">
    <property type="term" value="P:binding of sperm to zona pellucida"/>
    <property type="evidence" value="ECO:0000316"/>
    <property type="project" value="MGI"/>
</dbReference>
<dbReference type="GO" id="GO:0030317">
    <property type="term" value="P:flagellated sperm motility"/>
    <property type="evidence" value="ECO:0000316"/>
    <property type="project" value="MGI"/>
</dbReference>
<dbReference type="GO" id="GO:0007341">
    <property type="term" value="P:penetration of zona pellucida"/>
    <property type="evidence" value="ECO:0000315"/>
    <property type="project" value="MGI"/>
</dbReference>
<dbReference type="GO" id="GO:0010954">
    <property type="term" value="P:positive regulation of protein processing"/>
    <property type="evidence" value="ECO:0000315"/>
    <property type="project" value="UniProtKB"/>
</dbReference>
<dbReference type="GO" id="GO:0035092">
    <property type="term" value="P:sperm DNA condensation"/>
    <property type="evidence" value="ECO:0000315"/>
    <property type="project" value="UniProtKB"/>
</dbReference>
<dbReference type="GO" id="GO:0007283">
    <property type="term" value="P:spermatogenesis"/>
    <property type="evidence" value="ECO:0000315"/>
    <property type="project" value="MGI"/>
</dbReference>
<dbReference type="InterPro" id="IPR000678">
    <property type="entry name" value="TP2"/>
</dbReference>
<dbReference type="PANTHER" id="PTHR17488">
    <property type="entry name" value="NUCLEAR TRANSITION PROTEIN 2"/>
    <property type="match status" value="1"/>
</dbReference>
<dbReference type="PANTHER" id="PTHR17488:SF0">
    <property type="entry name" value="NUCLEAR TRANSITION PROTEIN 2"/>
    <property type="match status" value="1"/>
</dbReference>
<dbReference type="Pfam" id="PF01254">
    <property type="entry name" value="TP2"/>
    <property type="match status" value="2"/>
</dbReference>
<dbReference type="PROSITE" id="PS00970">
    <property type="entry name" value="TP2_1"/>
    <property type="match status" value="1"/>
</dbReference>
<dbReference type="PROSITE" id="PS00971">
    <property type="entry name" value="TP2_2"/>
    <property type="match status" value="1"/>
</dbReference>
<gene>
    <name evidence="9" type="primary">Tnp2</name>
</gene>